<evidence type="ECO:0000250" key="1">
    <source>
        <dbReference type="UniProtKB" id="A0A0H3LKL4"/>
    </source>
</evidence>
<evidence type="ECO:0000250" key="2">
    <source>
        <dbReference type="UniProtKB" id="Q88FY2"/>
    </source>
</evidence>
<evidence type="ECO:0000269" key="3">
    <source>
    </source>
</evidence>
<evidence type="ECO:0000269" key="4">
    <source>
    </source>
</evidence>
<evidence type="ECO:0000303" key="5">
    <source>
    </source>
</evidence>
<evidence type="ECO:0000305" key="6"/>
<evidence type="ECO:0000305" key="7">
    <source>
    </source>
</evidence>
<evidence type="ECO:0000305" key="8">
    <source>
    </source>
</evidence>
<proteinExistence type="inferred from homology"/>
<organism>
    <name type="scientific">Streptomyces platensis</name>
    <dbReference type="NCBI Taxonomy" id="58346"/>
    <lineage>
        <taxon>Bacteria</taxon>
        <taxon>Bacillati</taxon>
        <taxon>Actinomycetota</taxon>
        <taxon>Actinomycetes</taxon>
        <taxon>Kitasatosporales</taxon>
        <taxon>Streptomycetaceae</taxon>
        <taxon>Streptomyces</taxon>
    </lineage>
</organism>
<keyword id="KW-0045">Antibiotic biosynthesis</keyword>
<keyword id="KW-0274">FAD</keyword>
<keyword id="KW-0285">Flavoprotein</keyword>
<keyword id="KW-0503">Monooxygenase</keyword>
<keyword id="KW-0521">NADP</keyword>
<keyword id="KW-0560">Oxidoreductase</keyword>
<sequence>MTHISTHRPRIAVIGGGIAGLTVAASLLRAGIECTVYEQATVFADAGAGIQLAPNSARILHRLGLAGALERRATRAHAIETRRWRDGAPLARTELGASCVERYGAPYYLIQRADLHRSLLELLPPGVVRHSAACTAAEERPDGVTLRFADGTSEEAGVVVGADGIHSALRNTLVGDRPRFSGHTVHRGLVAADRLPSLFEVPKVLFWLGPNGHVTSYPIARHGLVHFSAVITSPEWDPEVWSAPSRPEEAAAAFAGWNSDVAELIGAAEGTHHWALFDRDCVGGWSTGRMTLAGDAAHPMVPYLSQGANQAIEDAWVLADLLGAADVDPGPALRRYEELRLPRVREVHRRSRERGHEFHLPDGPRQRLRDRSMPTAERLDDYAWLYGFEAAPVGSR</sequence>
<accession>E2CYT2</accession>
<comment type="function">
    <text evidence="3 4 7">Part of a gene cluster involved in the biosynthesis of thioplatencin (ThioPTN) and platencin (PTN), potent and selective inhibitors of bacterial and mammalian fatty acid synthases (PubMed:21825154, PubMed:29915173). Catalyzes the hydroxylation of 3-amino-4-hydroxybenzoate (3,4-AHBA) to 3-amino-2,4-dihydroxybenzoate (3,2,4-ADHBA) (Probable).</text>
</comment>
<comment type="catalytic activity">
    <reaction evidence="7">
        <text>3-amino-4-hydroxybenzoate + NADPH + O2 + H(+) = 3-amino-2,4-dihydroxybenzoate + NADP(+) + H2O</text>
        <dbReference type="Rhea" id="RHEA:68992"/>
        <dbReference type="ChEBI" id="CHEBI:15377"/>
        <dbReference type="ChEBI" id="CHEBI:15378"/>
        <dbReference type="ChEBI" id="CHEBI:15379"/>
        <dbReference type="ChEBI" id="CHEBI:57783"/>
        <dbReference type="ChEBI" id="CHEBI:58349"/>
        <dbReference type="ChEBI" id="CHEBI:60005"/>
        <dbReference type="ChEBI" id="CHEBI:180657"/>
        <dbReference type="EC" id="1.14.13.249"/>
    </reaction>
</comment>
<comment type="cofactor">
    <cofactor evidence="2">
        <name>FAD</name>
        <dbReference type="ChEBI" id="CHEBI:57692"/>
    </cofactor>
    <text evidence="2">Binds 1 FAD molecule per subunit.</text>
</comment>
<comment type="pathway">
    <text evidence="7 8">Antibiotic biosynthesis.</text>
</comment>
<comment type="similarity">
    <text evidence="6">Belongs to the 6-hydroxynicotinate 3-monooxygenase family.</text>
</comment>
<reference key="1">
    <citation type="journal article" date="2011" name="Proc. Natl. Acad. Sci. U.S.A.">
        <title>Dedicated ent-kaurene and ent-atiserene synthases for platensimycin and platencin biosynthesis.</title>
        <authorList>
            <person name="Smanski M.J."/>
            <person name="Yu Z."/>
            <person name="Casper J."/>
            <person name="Lin S."/>
            <person name="Peterson R.M."/>
            <person name="Chen Y."/>
            <person name="Wendt-Pienkowski E."/>
            <person name="Rajski S.R."/>
            <person name="Shen B."/>
        </authorList>
    </citation>
    <scope>NUCLEOTIDE SEQUENCE [GENOMIC DNA]</scope>
    <scope>FUNCTION</scope>
    <source>
        <strain>MA7339</strain>
    </source>
</reference>
<reference key="2">
    <citation type="journal article" date="2018" name="Nat. Commun.">
        <title>Biosynthesis of thiocarboxylic acid-containing natural products.</title>
        <authorList>
            <person name="Dong L.B."/>
            <person name="Rudolf J.D."/>
            <person name="Kang D."/>
            <person name="Wang N."/>
            <person name="He C.Q."/>
            <person name="Deng Y."/>
            <person name="Huang Y."/>
            <person name="Houk K.N."/>
            <person name="Duan Y."/>
            <person name="Shen B."/>
        </authorList>
    </citation>
    <scope>FUNCTION</scope>
    <source>
        <strain>MA7339</strain>
    </source>
</reference>
<dbReference type="EC" id="1.14.13.249" evidence="7"/>
<dbReference type="EMBL" id="GQ398492">
    <property type="protein sequence ID" value="ADD82995.1"/>
    <property type="molecule type" value="Genomic_DNA"/>
</dbReference>
<dbReference type="SMR" id="E2CYT2"/>
<dbReference type="GO" id="GO:0071949">
    <property type="term" value="F:FAD binding"/>
    <property type="evidence" value="ECO:0007669"/>
    <property type="project" value="InterPro"/>
</dbReference>
<dbReference type="GO" id="GO:0004497">
    <property type="term" value="F:monooxygenase activity"/>
    <property type="evidence" value="ECO:0007669"/>
    <property type="project" value="UniProtKB-KW"/>
</dbReference>
<dbReference type="GO" id="GO:0017000">
    <property type="term" value="P:antibiotic biosynthetic process"/>
    <property type="evidence" value="ECO:0007669"/>
    <property type="project" value="UniProtKB-KW"/>
</dbReference>
<dbReference type="Gene3D" id="3.50.50.60">
    <property type="entry name" value="FAD/NAD(P)-binding domain"/>
    <property type="match status" value="1"/>
</dbReference>
<dbReference type="InterPro" id="IPR002938">
    <property type="entry name" value="FAD-bd"/>
</dbReference>
<dbReference type="InterPro" id="IPR050493">
    <property type="entry name" value="FAD-dep_Monooxygenase_BioMet"/>
</dbReference>
<dbReference type="InterPro" id="IPR036188">
    <property type="entry name" value="FAD/NAD-bd_sf"/>
</dbReference>
<dbReference type="PANTHER" id="PTHR13789:SF318">
    <property type="entry name" value="GERANYLGERANYL DIPHOSPHATE REDUCTASE"/>
    <property type="match status" value="1"/>
</dbReference>
<dbReference type="PANTHER" id="PTHR13789">
    <property type="entry name" value="MONOOXYGENASE"/>
    <property type="match status" value="1"/>
</dbReference>
<dbReference type="Pfam" id="PF01494">
    <property type="entry name" value="FAD_binding_3"/>
    <property type="match status" value="1"/>
</dbReference>
<dbReference type="PRINTS" id="PR00420">
    <property type="entry name" value="RNGMNOXGNASE"/>
</dbReference>
<dbReference type="SUPFAM" id="SSF54373">
    <property type="entry name" value="FAD-linked reductases, C-terminal domain"/>
    <property type="match status" value="1"/>
</dbReference>
<dbReference type="SUPFAM" id="SSF51905">
    <property type="entry name" value="FAD/NAD(P)-binding domain"/>
    <property type="match status" value="1"/>
</dbReference>
<gene>
    <name evidence="5" type="primary">PtnB3</name>
</gene>
<feature type="chain" id="PRO_0000457475" description="3-amino-4-hydroxybenzoate 2-monooxygenase PtnB3">
    <location>
        <begin position="1"/>
        <end position="396"/>
    </location>
</feature>
<feature type="active site" description="Proton acceptor" evidence="1">
    <location>
        <position position="217"/>
    </location>
</feature>
<feature type="binding site" evidence="2">
    <location>
        <position position="19"/>
    </location>
    <ligand>
        <name>FAD</name>
        <dbReference type="ChEBI" id="CHEBI:57692"/>
    </ligand>
</feature>
<feature type="binding site" evidence="2">
    <location>
        <begin position="38"/>
        <end position="39"/>
    </location>
    <ligand>
        <name>FAD</name>
        <dbReference type="ChEBI" id="CHEBI:57692"/>
    </ligand>
</feature>
<feature type="binding site" evidence="2">
    <location>
        <position position="112"/>
    </location>
    <ligand>
        <name>FAD</name>
        <dbReference type="ChEBI" id="CHEBI:57692"/>
    </ligand>
</feature>
<feature type="binding site" evidence="2">
    <location>
        <position position="295"/>
    </location>
    <ligand>
        <name>FAD</name>
        <dbReference type="ChEBI" id="CHEBI:57692"/>
    </ligand>
</feature>
<name>AHBM2_STRPT</name>
<protein>
    <recommendedName>
        <fullName evidence="6">3-amino-4-hydroxybenzoate 2-monooxygenase PtnB3</fullName>
        <ecNumber evidence="7">1.14.13.249</ecNumber>
    </recommendedName>
</protein>